<name>SMY2A_DANRE</name>
<organism>
    <name type="scientific">Danio rerio</name>
    <name type="common">Zebrafish</name>
    <name type="synonym">Brachydanio rerio</name>
    <dbReference type="NCBI Taxonomy" id="7955"/>
    <lineage>
        <taxon>Eukaryota</taxon>
        <taxon>Metazoa</taxon>
        <taxon>Chordata</taxon>
        <taxon>Craniata</taxon>
        <taxon>Vertebrata</taxon>
        <taxon>Euteleostomi</taxon>
        <taxon>Actinopterygii</taxon>
        <taxon>Neopterygii</taxon>
        <taxon>Teleostei</taxon>
        <taxon>Ostariophysi</taxon>
        <taxon>Cypriniformes</taxon>
        <taxon>Danionidae</taxon>
        <taxon>Danioninae</taxon>
        <taxon>Danio</taxon>
    </lineage>
</organism>
<keyword id="KW-0156">Chromatin regulator</keyword>
<keyword id="KW-0963">Cytoplasm</keyword>
<keyword id="KW-0479">Metal-binding</keyword>
<keyword id="KW-0489">Methyltransferase</keyword>
<keyword id="KW-0539">Nucleus</keyword>
<keyword id="KW-1185">Reference proteome</keyword>
<keyword id="KW-0949">S-adenosyl-L-methionine</keyword>
<keyword id="KW-0804">Transcription</keyword>
<keyword id="KW-0805">Transcription regulation</keyword>
<keyword id="KW-0808">Transferase</keyword>
<keyword id="KW-0862">Zinc</keyword>
<keyword id="KW-0863">Zinc-finger</keyword>
<proteinExistence type="evidence at transcript level"/>
<accession>Q5BJI7</accession>
<reference key="1">
    <citation type="submission" date="2005-03" db="EMBL/GenBank/DDBJ databases">
        <authorList>
            <consortium name="NIH - Zebrafish Gene Collection (ZGC) project"/>
        </authorList>
    </citation>
    <scope>NUCLEOTIDE SEQUENCE [LARGE SCALE MRNA]</scope>
    <source>
        <tissue>Embryo</tissue>
    </source>
</reference>
<gene>
    <name type="primary">smyd2a</name>
    <name type="synonym">smyd2</name>
    <name type="ORF">zgc:110553</name>
</gene>
<protein>
    <recommendedName>
        <fullName>N-lysine methyltransferase SMYD2-A</fullName>
        <ecNumber evidence="2">2.1.1.-</ecNumber>
    </recommendedName>
    <alternativeName>
        <fullName>Histone methyltransferase SMYD2-A</fullName>
        <ecNumber evidence="2">2.1.1.354</ecNumber>
    </alternativeName>
    <alternativeName>
        <fullName>SET and MYND domain-containing protein 2A</fullName>
    </alternativeName>
</protein>
<comment type="function">
    <text evidence="2">Protein-lysine N-methyltransferase that methylates both histones and non-histone proteins, including p53/TP53 and RB1. Specifically trimethylates histone H3 'Lys-4' (H3K4me3) in vivo. The activity requires interaction with HSP90alpha. Shows even higher methyltransferase activity on p53/TP53. Monomethylates 'Lys-370' of p53/TP53, leading to decreased DNA-binding activity and subsequent transcriptional regulation activity of p53/TP53. Monomethylates RB1 at 'Lys-860'.</text>
</comment>
<comment type="catalytic activity">
    <reaction evidence="2">
        <text>L-lysyl(4)-[histone H3] + 3 S-adenosyl-L-methionine = N(6),N(6),N(6)-trimethyl-L-lysyl(4)-[histone H3] + 3 S-adenosyl-L-homocysteine + 3 H(+)</text>
        <dbReference type="Rhea" id="RHEA:60260"/>
        <dbReference type="Rhea" id="RHEA-COMP:15537"/>
        <dbReference type="Rhea" id="RHEA-COMP:15547"/>
        <dbReference type="ChEBI" id="CHEBI:15378"/>
        <dbReference type="ChEBI" id="CHEBI:29969"/>
        <dbReference type="ChEBI" id="CHEBI:57856"/>
        <dbReference type="ChEBI" id="CHEBI:59789"/>
        <dbReference type="ChEBI" id="CHEBI:61961"/>
        <dbReference type="EC" id="2.1.1.354"/>
    </reaction>
</comment>
<comment type="catalytic activity">
    <reaction evidence="2">
        <text>L-lysyl-[protein] + S-adenosyl-L-methionine = N(6)-methyl-L-lysyl-[protein] + S-adenosyl-L-homocysteine + H(+)</text>
        <dbReference type="Rhea" id="RHEA:51736"/>
        <dbReference type="Rhea" id="RHEA-COMP:9752"/>
        <dbReference type="Rhea" id="RHEA-COMP:13053"/>
        <dbReference type="ChEBI" id="CHEBI:15378"/>
        <dbReference type="ChEBI" id="CHEBI:29969"/>
        <dbReference type="ChEBI" id="CHEBI:57856"/>
        <dbReference type="ChEBI" id="CHEBI:59789"/>
        <dbReference type="ChEBI" id="CHEBI:61929"/>
    </reaction>
</comment>
<comment type="subcellular location">
    <subcellularLocation>
        <location evidence="1">Cytoplasm</location>
        <location evidence="1">Cytosol</location>
    </subcellularLocation>
    <subcellularLocation>
        <location evidence="1">Nucleus</location>
    </subcellularLocation>
</comment>
<comment type="similarity">
    <text evidence="4">Belongs to the class V-like SAM-binding methyltransferase superfamily.</text>
</comment>
<feature type="chain" id="PRO_0000405848" description="N-lysine methyltransferase SMYD2-A">
    <location>
        <begin position="1"/>
        <end position="435"/>
    </location>
</feature>
<feature type="domain" description="SET" evidence="4">
    <location>
        <begin position="7"/>
        <end position="241"/>
    </location>
</feature>
<feature type="zinc finger region" description="MYND-type" evidence="3">
    <location>
        <begin position="52"/>
        <end position="90"/>
    </location>
</feature>
<feature type="binding site" evidence="1">
    <location>
        <begin position="17"/>
        <end position="19"/>
    </location>
    <ligand>
        <name>S-adenosyl-L-methionine</name>
        <dbReference type="ChEBI" id="CHEBI:59789"/>
    </ligand>
</feature>
<feature type="binding site" evidence="3">
    <location>
        <position position="52"/>
    </location>
    <ligand>
        <name>Zn(2+)</name>
        <dbReference type="ChEBI" id="CHEBI:29105"/>
        <label>1</label>
    </ligand>
</feature>
<feature type="binding site" evidence="3">
    <location>
        <position position="55"/>
    </location>
    <ligand>
        <name>Zn(2+)</name>
        <dbReference type="ChEBI" id="CHEBI:29105"/>
        <label>1</label>
    </ligand>
</feature>
<feature type="binding site" evidence="3">
    <location>
        <position position="65"/>
    </location>
    <ligand>
        <name>Zn(2+)</name>
        <dbReference type="ChEBI" id="CHEBI:29105"/>
        <label>2</label>
    </ligand>
</feature>
<feature type="binding site" evidence="3">
    <location>
        <position position="68"/>
    </location>
    <ligand>
        <name>Zn(2+)</name>
        <dbReference type="ChEBI" id="CHEBI:29105"/>
        <label>2</label>
    </ligand>
</feature>
<feature type="binding site" evidence="3">
    <location>
        <position position="74"/>
    </location>
    <ligand>
        <name>Zn(2+)</name>
        <dbReference type="ChEBI" id="CHEBI:29105"/>
        <label>1</label>
    </ligand>
</feature>
<feature type="binding site" evidence="3">
    <location>
        <position position="78"/>
    </location>
    <ligand>
        <name>Zn(2+)</name>
        <dbReference type="ChEBI" id="CHEBI:29105"/>
        <label>1</label>
    </ligand>
</feature>
<feature type="binding site" evidence="3">
    <location>
        <position position="86"/>
    </location>
    <ligand>
        <name>Zn(2+)</name>
        <dbReference type="ChEBI" id="CHEBI:29105"/>
        <label>2</label>
    </ligand>
</feature>
<feature type="binding site" evidence="3">
    <location>
        <position position="90"/>
    </location>
    <ligand>
        <name>Zn(2+)</name>
        <dbReference type="ChEBI" id="CHEBI:29105"/>
        <label>2</label>
    </ligand>
</feature>
<feature type="binding site" evidence="4">
    <location>
        <position position="137"/>
    </location>
    <ligand>
        <name>S-adenosyl-L-methionine</name>
        <dbReference type="ChEBI" id="CHEBI:59789"/>
    </ligand>
</feature>
<feature type="binding site" evidence="1">
    <location>
        <begin position="206"/>
        <end position="207"/>
    </location>
    <ligand>
        <name>S-adenosyl-L-methionine</name>
        <dbReference type="ChEBI" id="CHEBI:59789"/>
    </ligand>
</feature>
<feature type="binding site" evidence="1">
    <location>
        <begin position="258"/>
        <end position="260"/>
    </location>
    <ligand>
        <name>S-adenosyl-L-methionine</name>
        <dbReference type="ChEBI" id="CHEBI:59789"/>
    </ligand>
</feature>
<evidence type="ECO:0000250" key="1"/>
<evidence type="ECO:0000250" key="2">
    <source>
        <dbReference type="UniProtKB" id="Q9NRG4"/>
    </source>
</evidence>
<evidence type="ECO:0000255" key="3">
    <source>
        <dbReference type="PROSITE-ProRule" id="PRU00134"/>
    </source>
</evidence>
<evidence type="ECO:0000255" key="4">
    <source>
        <dbReference type="PROSITE-ProRule" id="PRU00190"/>
    </source>
</evidence>
<sequence length="435" mass="50064">MKKEGIEGTERFLSPGKGRGLKAIKHFKVGDLVFACPAYAYVLTVNERGGRCECCFTRKEGLSKCGKCKQAYYCNVECQRGDWPMHKLECSAMCAYGENWCPSETVRLVARIILKQKHQTERTPSERVLTLRELEAHLDKLDNEKNEMNDTDIAALHHFYSRHLDFPDNAALTELIAQVNCNGFTIEDEELSHLGSALFPDVALMNHSCSPNVIVTYKGTVAEVRAVQEINPEEEIFNSYIDLLYPTEDRIERLKDSYFFNCDCKECTSKSKDEAKMEIRQKLSIPPEEEEIKQMVIYARNVIEEFRRAKHYKTPSELLEICELSMEKMGAIFAETNVYMLHMMYQAMGVCLYMQDWDGAMKYGEKIIHPYSVHYPPYSLNVASMYLKLGRLYLGLEKRTQGVKALKKALAIMDIAHGKDHPYIDEIKKEMEEQT</sequence>
<dbReference type="EC" id="2.1.1.-" evidence="2"/>
<dbReference type="EC" id="2.1.1.354" evidence="2"/>
<dbReference type="EMBL" id="BC091465">
    <property type="protein sequence ID" value="AAH91465.1"/>
    <property type="molecule type" value="mRNA"/>
</dbReference>
<dbReference type="RefSeq" id="NP_001013568.1">
    <property type="nucleotide sequence ID" value="NM_001013550.1"/>
</dbReference>
<dbReference type="SMR" id="Q5BJI7"/>
<dbReference type="FunCoup" id="Q5BJI7">
    <property type="interactions" value="888"/>
</dbReference>
<dbReference type="STRING" id="7955.ENSDARP00000071926"/>
<dbReference type="PaxDb" id="7955-ENSDARP00000071926"/>
<dbReference type="GeneID" id="541423"/>
<dbReference type="KEGG" id="dre:541423"/>
<dbReference type="AGR" id="ZFIN:ZDB-GENE-050320-126"/>
<dbReference type="CTD" id="541423"/>
<dbReference type="ZFIN" id="ZDB-GENE-050320-126">
    <property type="gene designation" value="smyd2a"/>
</dbReference>
<dbReference type="eggNOG" id="KOG2084">
    <property type="taxonomic scope" value="Eukaryota"/>
</dbReference>
<dbReference type="InParanoid" id="Q5BJI7"/>
<dbReference type="OrthoDB" id="5945798at2759"/>
<dbReference type="PhylomeDB" id="Q5BJI7"/>
<dbReference type="Reactome" id="R-DRE-6804760">
    <property type="pathway name" value="Regulation of TP53 Activity through Methylation"/>
</dbReference>
<dbReference type="PRO" id="PR:Q5BJI7"/>
<dbReference type="Proteomes" id="UP000000437">
    <property type="component" value="Chromosome 17"/>
</dbReference>
<dbReference type="GO" id="GO:0005737">
    <property type="term" value="C:cytoplasm"/>
    <property type="evidence" value="ECO:0000250"/>
    <property type="project" value="UniProtKB"/>
</dbReference>
<dbReference type="GO" id="GO:0005829">
    <property type="term" value="C:cytosol"/>
    <property type="evidence" value="ECO:0000250"/>
    <property type="project" value="UniProtKB"/>
</dbReference>
<dbReference type="GO" id="GO:0005634">
    <property type="term" value="C:nucleus"/>
    <property type="evidence" value="ECO:0000250"/>
    <property type="project" value="UniProtKB"/>
</dbReference>
<dbReference type="GO" id="GO:0046975">
    <property type="term" value="F:histone H3K36 methyltransferase activity"/>
    <property type="evidence" value="ECO:0000250"/>
    <property type="project" value="UniProtKB"/>
</dbReference>
<dbReference type="GO" id="GO:0140999">
    <property type="term" value="F:histone H3K4 trimethyltransferase activity"/>
    <property type="evidence" value="ECO:0007669"/>
    <property type="project" value="UniProtKB-EC"/>
</dbReference>
<dbReference type="GO" id="GO:0016279">
    <property type="term" value="F:protein-lysine N-methyltransferase activity"/>
    <property type="evidence" value="ECO:0000250"/>
    <property type="project" value="UniProtKB"/>
</dbReference>
<dbReference type="GO" id="GO:0000993">
    <property type="term" value="F:RNA polymerase II complex binding"/>
    <property type="evidence" value="ECO:0000250"/>
    <property type="project" value="UniProtKB"/>
</dbReference>
<dbReference type="GO" id="GO:0008270">
    <property type="term" value="F:zinc ion binding"/>
    <property type="evidence" value="ECO:0007669"/>
    <property type="project" value="UniProtKB-KW"/>
</dbReference>
<dbReference type="GO" id="GO:0033336">
    <property type="term" value="P:caudal fin development"/>
    <property type="evidence" value="ECO:0000315"/>
    <property type="project" value="ZFIN"/>
</dbReference>
<dbReference type="GO" id="GO:0060047">
    <property type="term" value="P:heart contraction"/>
    <property type="evidence" value="ECO:0000315"/>
    <property type="project" value="ZFIN"/>
</dbReference>
<dbReference type="GO" id="GO:0007507">
    <property type="term" value="P:heart development"/>
    <property type="evidence" value="ECO:0000315"/>
    <property type="project" value="ZFIN"/>
</dbReference>
<dbReference type="GO" id="GO:0008285">
    <property type="term" value="P:negative regulation of cell population proliferation"/>
    <property type="evidence" value="ECO:0000250"/>
    <property type="project" value="UniProtKB"/>
</dbReference>
<dbReference type="GO" id="GO:0000122">
    <property type="term" value="P:negative regulation of transcription by RNA polymerase II"/>
    <property type="evidence" value="ECO:0000250"/>
    <property type="project" value="UniProtKB"/>
</dbReference>
<dbReference type="GO" id="GO:0018027">
    <property type="term" value="P:peptidyl-lysine dimethylation"/>
    <property type="evidence" value="ECO:0000250"/>
    <property type="project" value="UniProtKB"/>
</dbReference>
<dbReference type="GO" id="GO:0018026">
    <property type="term" value="P:peptidyl-lysine monomethylation"/>
    <property type="evidence" value="ECO:0000250"/>
    <property type="project" value="UniProtKB"/>
</dbReference>
<dbReference type="GO" id="GO:0043516">
    <property type="term" value="P:regulation of DNA damage response, signal transduction by p53 class mediator"/>
    <property type="evidence" value="ECO:0000250"/>
    <property type="project" value="UniProtKB"/>
</dbReference>
<dbReference type="GO" id="GO:0060297">
    <property type="term" value="P:regulation of sarcomere organization"/>
    <property type="evidence" value="ECO:0000315"/>
    <property type="project" value="ZFIN"/>
</dbReference>
<dbReference type="GO" id="GO:0007519">
    <property type="term" value="P:skeletal muscle tissue development"/>
    <property type="evidence" value="ECO:0000315"/>
    <property type="project" value="ZFIN"/>
</dbReference>
<dbReference type="FunFam" id="2.170.270.10:FF:000013">
    <property type="entry name" value="Histone-lysine N-methyltransferase SMYD1 isoform 1"/>
    <property type="match status" value="1"/>
</dbReference>
<dbReference type="FunFam" id="6.10.140.2220:FF:000013">
    <property type="entry name" value="N-lysine methyltransferase SMYD2 isoform X1"/>
    <property type="match status" value="1"/>
</dbReference>
<dbReference type="Gene3D" id="1.10.220.160">
    <property type="match status" value="1"/>
</dbReference>
<dbReference type="Gene3D" id="1.25.40.970">
    <property type="match status" value="1"/>
</dbReference>
<dbReference type="Gene3D" id="6.10.140.2220">
    <property type="match status" value="1"/>
</dbReference>
<dbReference type="Gene3D" id="2.170.270.10">
    <property type="entry name" value="SET domain"/>
    <property type="match status" value="1"/>
</dbReference>
<dbReference type="Gene3D" id="1.25.40.10">
    <property type="entry name" value="Tetratricopeptide repeat domain"/>
    <property type="match status" value="1"/>
</dbReference>
<dbReference type="InterPro" id="IPR050869">
    <property type="entry name" value="H3K4_H4K5_MeTrfase"/>
</dbReference>
<dbReference type="InterPro" id="IPR001214">
    <property type="entry name" value="SET_dom"/>
</dbReference>
<dbReference type="InterPro" id="IPR046341">
    <property type="entry name" value="SET_dom_sf"/>
</dbReference>
<dbReference type="InterPro" id="IPR011990">
    <property type="entry name" value="TPR-like_helical_dom_sf"/>
</dbReference>
<dbReference type="InterPro" id="IPR002893">
    <property type="entry name" value="Znf_MYND"/>
</dbReference>
<dbReference type="PANTHER" id="PTHR12197">
    <property type="entry name" value="HISTONE-LYSINE N-METHYLTRANSFERASE SMYD"/>
    <property type="match status" value="1"/>
</dbReference>
<dbReference type="PANTHER" id="PTHR12197:SF193">
    <property type="entry name" value="N-LYSINE METHYLTRANSFERASE SMYD2"/>
    <property type="match status" value="1"/>
</dbReference>
<dbReference type="Pfam" id="PF00856">
    <property type="entry name" value="SET"/>
    <property type="match status" value="1"/>
</dbReference>
<dbReference type="Pfam" id="PF01753">
    <property type="entry name" value="zf-MYND"/>
    <property type="match status" value="1"/>
</dbReference>
<dbReference type="SMART" id="SM00317">
    <property type="entry name" value="SET"/>
    <property type="match status" value="1"/>
</dbReference>
<dbReference type="SUPFAM" id="SSF82199">
    <property type="entry name" value="SET domain"/>
    <property type="match status" value="1"/>
</dbReference>
<dbReference type="PROSITE" id="PS50280">
    <property type="entry name" value="SET"/>
    <property type="match status" value="1"/>
</dbReference>
<dbReference type="PROSITE" id="PS01360">
    <property type="entry name" value="ZF_MYND_1"/>
    <property type="match status" value="1"/>
</dbReference>
<dbReference type="PROSITE" id="PS50865">
    <property type="entry name" value="ZF_MYND_2"/>
    <property type="match status" value="1"/>
</dbReference>